<dbReference type="EC" id="1.11.1.21" evidence="1"/>
<dbReference type="EMBL" id="CP001657">
    <property type="protein sequence ID" value="ACT13433.1"/>
    <property type="molecule type" value="Genomic_DNA"/>
</dbReference>
<dbReference type="RefSeq" id="WP_015840615.1">
    <property type="nucleotide sequence ID" value="NC_012917.1"/>
</dbReference>
<dbReference type="SMR" id="C6DK50"/>
<dbReference type="STRING" id="561230.PC1_2402"/>
<dbReference type="KEGG" id="pct:PC1_2402"/>
<dbReference type="eggNOG" id="COG0376">
    <property type="taxonomic scope" value="Bacteria"/>
</dbReference>
<dbReference type="HOGENOM" id="CLU_025424_2_0_6"/>
<dbReference type="OrthoDB" id="9759743at2"/>
<dbReference type="Proteomes" id="UP000002736">
    <property type="component" value="Chromosome"/>
</dbReference>
<dbReference type="GO" id="GO:0005829">
    <property type="term" value="C:cytosol"/>
    <property type="evidence" value="ECO:0007669"/>
    <property type="project" value="TreeGrafter"/>
</dbReference>
<dbReference type="GO" id="GO:0004096">
    <property type="term" value="F:catalase activity"/>
    <property type="evidence" value="ECO:0007669"/>
    <property type="project" value="UniProtKB-UniRule"/>
</dbReference>
<dbReference type="GO" id="GO:0020037">
    <property type="term" value="F:heme binding"/>
    <property type="evidence" value="ECO:0007669"/>
    <property type="project" value="InterPro"/>
</dbReference>
<dbReference type="GO" id="GO:0046872">
    <property type="term" value="F:metal ion binding"/>
    <property type="evidence" value="ECO:0007669"/>
    <property type="project" value="UniProtKB-KW"/>
</dbReference>
<dbReference type="GO" id="GO:0070301">
    <property type="term" value="P:cellular response to hydrogen peroxide"/>
    <property type="evidence" value="ECO:0007669"/>
    <property type="project" value="TreeGrafter"/>
</dbReference>
<dbReference type="GO" id="GO:0042744">
    <property type="term" value="P:hydrogen peroxide catabolic process"/>
    <property type="evidence" value="ECO:0007669"/>
    <property type="project" value="UniProtKB-KW"/>
</dbReference>
<dbReference type="CDD" id="cd00649">
    <property type="entry name" value="catalase_peroxidase_1"/>
    <property type="match status" value="1"/>
</dbReference>
<dbReference type="CDD" id="cd08200">
    <property type="entry name" value="catalase_peroxidase_2"/>
    <property type="match status" value="1"/>
</dbReference>
<dbReference type="FunFam" id="1.10.420.10:FF:000004">
    <property type="entry name" value="Catalase-peroxidase"/>
    <property type="match status" value="1"/>
</dbReference>
<dbReference type="FunFam" id="1.10.520.10:FF:000002">
    <property type="entry name" value="Catalase-peroxidase"/>
    <property type="match status" value="1"/>
</dbReference>
<dbReference type="Gene3D" id="1.10.520.10">
    <property type="match status" value="2"/>
</dbReference>
<dbReference type="Gene3D" id="1.10.420.10">
    <property type="entry name" value="Peroxidase, domain 2"/>
    <property type="match status" value="2"/>
</dbReference>
<dbReference type="HAMAP" id="MF_01961">
    <property type="entry name" value="Catal_peroxid"/>
    <property type="match status" value="1"/>
</dbReference>
<dbReference type="InterPro" id="IPR000763">
    <property type="entry name" value="Catalase_peroxidase"/>
</dbReference>
<dbReference type="InterPro" id="IPR002016">
    <property type="entry name" value="Haem_peroxidase"/>
</dbReference>
<dbReference type="InterPro" id="IPR010255">
    <property type="entry name" value="Haem_peroxidase_sf"/>
</dbReference>
<dbReference type="InterPro" id="IPR019794">
    <property type="entry name" value="Peroxidases_AS"/>
</dbReference>
<dbReference type="NCBIfam" id="TIGR00198">
    <property type="entry name" value="cat_per_HPI"/>
    <property type="match status" value="1"/>
</dbReference>
<dbReference type="NCBIfam" id="NF011635">
    <property type="entry name" value="PRK15061.1"/>
    <property type="match status" value="1"/>
</dbReference>
<dbReference type="PANTHER" id="PTHR30555:SF6">
    <property type="entry name" value="CATALASE-PEROXIDASE"/>
    <property type="match status" value="1"/>
</dbReference>
<dbReference type="PANTHER" id="PTHR30555">
    <property type="entry name" value="HYDROPEROXIDASE I, BIFUNCTIONAL CATALASE-PEROXIDASE"/>
    <property type="match status" value="1"/>
</dbReference>
<dbReference type="Pfam" id="PF00141">
    <property type="entry name" value="peroxidase"/>
    <property type="match status" value="2"/>
</dbReference>
<dbReference type="PRINTS" id="PR00460">
    <property type="entry name" value="BPEROXIDASE"/>
</dbReference>
<dbReference type="PRINTS" id="PR00458">
    <property type="entry name" value="PEROXIDASE"/>
</dbReference>
<dbReference type="SUPFAM" id="SSF48113">
    <property type="entry name" value="Heme-dependent peroxidases"/>
    <property type="match status" value="2"/>
</dbReference>
<dbReference type="PROSITE" id="PS00436">
    <property type="entry name" value="PEROXIDASE_2"/>
    <property type="match status" value="1"/>
</dbReference>
<dbReference type="PROSITE" id="PS50873">
    <property type="entry name" value="PEROXIDASE_4"/>
    <property type="match status" value="1"/>
</dbReference>
<organism>
    <name type="scientific">Pectobacterium carotovorum subsp. carotovorum (strain PC1)</name>
    <dbReference type="NCBI Taxonomy" id="561230"/>
    <lineage>
        <taxon>Bacteria</taxon>
        <taxon>Pseudomonadati</taxon>
        <taxon>Pseudomonadota</taxon>
        <taxon>Gammaproteobacteria</taxon>
        <taxon>Enterobacterales</taxon>
        <taxon>Pectobacteriaceae</taxon>
        <taxon>Pectobacterium</taxon>
    </lineage>
</organism>
<comment type="function">
    <text evidence="1">Bifunctional enzyme with both catalase and broad-spectrum peroxidase activity.</text>
</comment>
<comment type="catalytic activity">
    <reaction evidence="1">
        <text>H2O2 + AH2 = A + 2 H2O</text>
        <dbReference type="Rhea" id="RHEA:30275"/>
        <dbReference type="ChEBI" id="CHEBI:13193"/>
        <dbReference type="ChEBI" id="CHEBI:15377"/>
        <dbReference type="ChEBI" id="CHEBI:16240"/>
        <dbReference type="ChEBI" id="CHEBI:17499"/>
        <dbReference type="EC" id="1.11.1.21"/>
    </reaction>
</comment>
<comment type="catalytic activity">
    <reaction evidence="1">
        <text>2 H2O2 = O2 + 2 H2O</text>
        <dbReference type="Rhea" id="RHEA:20309"/>
        <dbReference type="ChEBI" id="CHEBI:15377"/>
        <dbReference type="ChEBI" id="CHEBI:15379"/>
        <dbReference type="ChEBI" id="CHEBI:16240"/>
        <dbReference type="EC" id="1.11.1.21"/>
    </reaction>
</comment>
<comment type="cofactor">
    <cofactor evidence="1">
        <name>heme b</name>
        <dbReference type="ChEBI" id="CHEBI:60344"/>
    </cofactor>
    <text evidence="1">Binds 1 heme b (iron(II)-protoporphyrin IX) group per dimer.</text>
</comment>
<comment type="subunit">
    <text evidence="1">Homodimer or homotetramer.</text>
</comment>
<comment type="PTM">
    <text evidence="1">Formation of the three residue Trp-Tyr-Met cross-link is important for the catalase, but not the peroxidase activity of the enzyme.</text>
</comment>
<comment type="similarity">
    <text evidence="1">Belongs to the peroxidase family. Peroxidase/catalase subfamily.</text>
</comment>
<keyword id="KW-0349">Heme</keyword>
<keyword id="KW-0376">Hydrogen peroxide</keyword>
<keyword id="KW-0408">Iron</keyword>
<keyword id="KW-0479">Metal-binding</keyword>
<keyword id="KW-0560">Oxidoreductase</keyword>
<keyword id="KW-0575">Peroxidase</keyword>
<feature type="chain" id="PRO_1000216224" description="Catalase-peroxidase">
    <location>
        <begin position="1"/>
        <end position="724"/>
    </location>
</feature>
<feature type="region of interest" description="Disordered" evidence="2">
    <location>
        <begin position="1"/>
        <end position="20"/>
    </location>
</feature>
<feature type="active site" description="Proton acceptor" evidence="1">
    <location>
        <position position="99"/>
    </location>
</feature>
<feature type="binding site" description="axial binding residue" evidence="1">
    <location>
        <position position="266"/>
    </location>
    <ligand>
        <name>heme b</name>
        <dbReference type="ChEBI" id="CHEBI:60344"/>
    </ligand>
    <ligandPart>
        <name>Fe</name>
        <dbReference type="ChEBI" id="CHEBI:18248"/>
    </ligandPart>
</feature>
<feature type="site" description="Transition state stabilizer" evidence="1">
    <location>
        <position position="95"/>
    </location>
</feature>
<feature type="cross-link" description="Tryptophyl-tyrosyl-methioninium (Trp-Tyr) (with M-251)" evidence="1">
    <location>
        <begin position="98"/>
        <end position="225"/>
    </location>
</feature>
<feature type="cross-link" description="Tryptophyl-tyrosyl-methioninium (Tyr-Met) (with W-98)" evidence="1">
    <location>
        <begin position="225"/>
        <end position="251"/>
    </location>
</feature>
<evidence type="ECO:0000255" key="1">
    <source>
        <dbReference type="HAMAP-Rule" id="MF_01961"/>
    </source>
</evidence>
<evidence type="ECO:0000256" key="2">
    <source>
        <dbReference type="SAM" id="MobiDB-lite"/>
    </source>
</evidence>
<name>KATG_PECCP</name>
<protein>
    <recommendedName>
        <fullName evidence="1">Catalase-peroxidase</fullName>
        <shortName evidence="1">CP</shortName>
        <ecNumber evidence="1">1.11.1.21</ecNumber>
    </recommendedName>
    <alternativeName>
        <fullName evidence="1">Peroxidase/catalase</fullName>
    </alternativeName>
</protein>
<accession>C6DK50</accession>
<sequence>MDENKTKPAGKCPVMHGGNTATGSSNTDWWPNALNLDILHQHDTKTNPLGSDFSYRDALKTLDVDALKKDLHALMTDSQEWWPADWGHYGGLMIRMAWHSAGTYRTADGRGGGGTGNQRFAPLNSWPDNVSLDKARRLLWPIKKKYGNKLSWADLIILAGNIAYESMGLKTFGFAFGREDIWHPEKDIYWGSEKEWLAKSTGRYGSDDRTTLENPLAAVQMGLIYVNPEGVDGNPDPLRTAQDMRVTFSRMAMNDEETVALTAGGHTVGKTHGNGDASLLGKAPEGTDVGEQGLGWHNPTGSGKGRYTVTSGLEGAWTTHPTQWDNGFFHMLLNHEWELKKSPAGAWQWEPVFIKEEDKPVDVEDPSIRYNPMMTDADMALKVDPEYRKISERFYQDQAYFSEVFARAWFKLTHRDMGPKTRYLGPDVPQEDLLWQDPVPAGRTDYDVDVVKARIAESSLSISELVATAWDSARTFRGSDMRGGANGARIRLAPQKDWVGNEPERLARVLVVLENIAAATGASVADTIVLAGNVGIEKAAKAAGVNITVPFAPGRGDTTDALTDVESFDVLEPIHDGYRNWLKKDYAVSPEELMLDRTQLMGLTAKEMTVLVGGLRVLGTNYGGTKHGVFTDREGALTNDFFANLTDMKYTWKPYRKDLYEIRDRKTGEVKWTATRLDLVFGSNSILRSYAEVYAQDDNKEKFVNDFVAAWVKVMNADRFDLAE</sequence>
<reference key="1">
    <citation type="submission" date="2009-07" db="EMBL/GenBank/DDBJ databases">
        <title>Complete sequence of Pectobacterium carotovorum subsp. carotovorum PC1.</title>
        <authorList>
            <consortium name="US DOE Joint Genome Institute"/>
            <person name="Lucas S."/>
            <person name="Copeland A."/>
            <person name="Lapidus A."/>
            <person name="Glavina del Rio T."/>
            <person name="Tice H."/>
            <person name="Bruce D."/>
            <person name="Goodwin L."/>
            <person name="Pitluck S."/>
            <person name="Munk A.C."/>
            <person name="Brettin T."/>
            <person name="Detter J.C."/>
            <person name="Han C."/>
            <person name="Tapia R."/>
            <person name="Larimer F."/>
            <person name="Land M."/>
            <person name="Hauser L."/>
            <person name="Kyrpides N."/>
            <person name="Mikhailova N."/>
            <person name="Balakrishnan V."/>
            <person name="Glasner J."/>
            <person name="Perna N.T."/>
        </authorList>
    </citation>
    <scope>NUCLEOTIDE SEQUENCE [LARGE SCALE GENOMIC DNA]</scope>
    <source>
        <strain>PC1</strain>
    </source>
</reference>
<proteinExistence type="inferred from homology"/>
<gene>
    <name evidence="1" type="primary">katG</name>
    <name type="ordered locus">PC1_2402</name>
</gene>